<name>JJJ2_YEAS7</name>
<sequence length="584" mass="67567">MSQVIEPQLDRTTYYSILGLTSNATSSEVHKSYLKLARLLHPDKTKSDKSEELFKAVVHAHSILTDEDQKLRYDRDLKIKGLHTYQPKKNCHIFKTKAKESQGASPTLGQSEAYHRQNKPYEQQPYGFGVGKKMTSSSKSKVPIFKSFNLKSYQRNHYYSSKKERKHGSPDIDSLFHETNGASKVRMTDAGKMDTNSQFQEIWEILGKNVYTHKSYSEDPNSCLGSALSDHEEEEEEAGKQQQQQQQQQQQQQHYGMTSKSSSPDEEQKDNKESKRESRVSPEENGEEETGHKQFKLPKTSTFSSGSHDSNLQSPFYNHEYRHYARSKFECKNQFRKSVSPIKEIPATTSTNEGWNILRDIIEKLNISNVDDRNKDLLFRRDEIGDKNHSDSIDIENLSIKEPKGMKRRKKDDISLEELFQSLPREKDYFMMDAINDSLESINLFKKPKTTQSHEQGGTFAQAESNRAKFKPLLEQCGITPEILDLQIPEIPEFDAVADLETLKLNVQLFNNQCNKLKETIHQVSLQRLRADTQFSDMLTQKQSIMVWKTYLEFDKSLMDKLNILQERQMQVIKIFSERCDGKV</sequence>
<keyword id="KW-0143">Chaperone</keyword>
<keyword id="KW-0963">Cytoplasm</keyword>
<keyword id="KW-0539">Nucleus</keyword>
<keyword id="KW-0597">Phosphoprotein</keyword>
<comment type="subcellular location">
    <subcellularLocation>
        <location evidence="1">Cytoplasm</location>
    </subcellularLocation>
    <subcellularLocation>
        <location evidence="1">Nucleus</location>
    </subcellularLocation>
</comment>
<comment type="miscellaneous">
    <text>Present with 184 molecules/cell in log phase SD medium.</text>
</comment>
<protein>
    <recommendedName>
        <fullName>J protein JJJ2</fullName>
    </recommendedName>
</protein>
<dbReference type="EMBL" id="AAFW02000044">
    <property type="protein sequence ID" value="EDN63222.1"/>
    <property type="molecule type" value="Genomic_DNA"/>
</dbReference>
<dbReference type="SMR" id="A6ZQH0"/>
<dbReference type="HOGENOM" id="CLU_490950_0_0_1"/>
<dbReference type="Proteomes" id="UP000007060">
    <property type="component" value="Unassembled WGS sequence"/>
</dbReference>
<dbReference type="GO" id="GO:0005789">
    <property type="term" value="C:endoplasmic reticulum membrane"/>
    <property type="evidence" value="ECO:0007669"/>
    <property type="project" value="TreeGrafter"/>
</dbReference>
<dbReference type="GO" id="GO:0005634">
    <property type="term" value="C:nucleus"/>
    <property type="evidence" value="ECO:0007669"/>
    <property type="project" value="UniProtKB-SubCell"/>
</dbReference>
<dbReference type="GO" id="GO:0030544">
    <property type="term" value="F:Hsp70 protein binding"/>
    <property type="evidence" value="ECO:0007669"/>
    <property type="project" value="TreeGrafter"/>
</dbReference>
<dbReference type="GO" id="GO:0071218">
    <property type="term" value="P:cellular response to misfolded protein"/>
    <property type="evidence" value="ECO:0007669"/>
    <property type="project" value="TreeGrafter"/>
</dbReference>
<dbReference type="GO" id="GO:0051085">
    <property type="term" value="P:chaperone cofactor-dependent protein refolding"/>
    <property type="evidence" value="ECO:0007669"/>
    <property type="project" value="TreeGrafter"/>
</dbReference>
<dbReference type="CDD" id="cd06257">
    <property type="entry name" value="DnaJ"/>
    <property type="match status" value="1"/>
</dbReference>
<dbReference type="FunFam" id="1.10.287.110:FF:000147">
    <property type="entry name" value="JJJ2p protein"/>
    <property type="match status" value="1"/>
</dbReference>
<dbReference type="Gene3D" id="1.10.287.110">
    <property type="entry name" value="DnaJ domain"/>
    <property type="match status" value="1"/>
</dbReference>
<dbReference type="InterPro" id="IPR001623">
    <property type="entry name" value="DnaJ_domain"/>
</dbReference>
<dbReference type="InterPro" id="IPR018253">
    <property type="entry name" value="DnaJ_domain_CS"/>
</dbReference>
<dbReference type="InterPro" id="IPR051100">
    <property type="entry name" value="DnaJ_subfamily_B/C"/>
</dbReference>
<dbReference type="InterPro" id="IPR036869">
    <property type="entry name" value="J_dom_sf"/>
</dbReference>
<dbReference type="PANTHER" id="PTHR43908">
    <property type="entry name" value="AT29763P-RELATED"/>
    <property type="match status" value="1"/>
</dbReference>
<dbReference type="PANTHER" id="PTHR43908:SF3">
    <property type="entry name" value="AT29763P-RELATED"/>
    <property type="match status" value="1"/>
</dbReference>
<dbReference type="Pfam" id="PF00226">
    <property type="entry name" value="DnaJ"/>
    <property type="match status" value="1"/>
</dbReference>
<dbReference type="PRINTS" id="PR00625">
    <property type="entry name" value="JDOMAIN"/>
</dbReference>
<dbReference type="SMART" id="SM00271">
    <property type="entry name" value="DnaJ"/>
    <property type="match status" value="1"/>
</dbReference>
<dbReference type="SUPFAM" id="SSF46565">
    <property type="entry name" value="Chaperone J-domain"/>
    <property type="match status" value="1"/>
</dbReference>
<dbReference type="PROSITE" id="PS00636">
    <property type="entry name" value="DNAJ_1"/>
    <property type="match status" value="1"/>
</dbReference>
<dbReference type="PROSITE" id="PS50076">
    <property type="entry name" value="DNAJ_2"/>
    <property type="match status" value="1"/>
</dbReference>
<evidence type="ECO:0000250" key="1"/>
<evidence type="ECO:0000250" key="2">
    <source>
        <dbReference type="UniProtKB" id="P46997"/>
    </source>
</evidence>
<evidence type="ECO:0000255" key="3">
    <source>
        <dbReference type="PROSITE-ProRule" id="PRU00286"/>
    </source>
</evidence>
<evidence type="ECO:0000256" key="4">
    <source>
        <dbReference type="SAM" id="MobiDB-lite"/>
    </source>
</evidence>
<accession>A6ZQH0</accession>
<feature type="chain" id="PRO_0000333579" description="J protein JJJ2">
    <location>
        <begin position="1"/>
        <end position="584"/>
    </location>
</feature>
<feature type="domain" description="J" evidence="3">
    <location>
        <begin position="13"/>
        <end position="77"/>
    </location>
</feature>
<feature type="region of interest" description="Disordered" evidence="4">
    <location>
        <begin position="216"/>
        <end position="312"/>
    </location>
</feature>
<feature type="compositionally biased region" description="Low complexity" evidence="4">
    <location>
        <begin position="241"/>
        <end position="253"/>
    </location>
</feature>
<feature type="compositionally biased region" description="Basic and acidic residues" evidence="4">
    <location>
        <begin position="269"/>
        <end position="282"/>
    </location>
</feature>
<feature type="compositionally biased region" description="Polar residues" evidence="4">
    <location>
        <begin position="299"/>
        <end position="312"/>
    </location>
</feature>
<feature type="modified residue" description="Phosphoserine" evidence="2">
    <location>
        <position position="229"/>
    </location>
</feature>
<organism>
    <name type="scientific">Saccharomyces cerevisiae (strain YJM789)</name>
    <name type="common">Baker's yeast</name>
    <dbReference type="NCBI Taxonomy" id="307796"/>
    <lineage>
        <taxon>Eukaryota</taxon>
        <taxon>Fungi</taxon>
        <taxon>Dikarya</taxon>
        <taxon>Ascomycota</taxon>
        <taxon>Saccharomycotina</taxon>
        <taxon>Saccharomycetes</taxon>
        <taxon>Saccharomycetales</taxon>
        <taxon>Saccharomycetaceae</taxon>
        <taxon>Saccharomyces</taxon>
    </lineage>
</organism>
<gene>
    <name type="primary">JJJ2</name>
    <name type="ORF">SCY_3131</name>
</gene>
<reference key="1">
    <citation type="journal article" date="2007" name="Proc. Natl. Acad. Sci. U.S.A.">
        <title>Genome sequencing and comparative analysis of Saccharomyces cerevisiae strain YJM789.</title>
        <authorList>
            <person name="Wei W."/>
            <person name="McCusker J.H."/>
            <person name="Hyman R.W."/>
            <person name="Jones T."/>
            <person name="Ning Y."/>
            <person name="Cao Z."/>
            <person name="Gu Z."/>
            <person name="Bruno D."/>
            <person name="Miranda M."/>
            <person name="Nguyen M."/>
            <person name="Wilhelmy J."/>
            <person name="Komp C."/>
            <person name="Tamse R."/>
            <person name="Wang X."/>
            <person name="Jia P."/>
            <person name="Luedi P."/>
            <person name="Oefner P.J."/>
            <person name="David L."/>
            <person name="Dietrich F.S."/>
            <person name="Li Y."/>
            <person name="Davis R.W."/>
            <person name="Steinmetz L.M."/>
        </authorList>
    </citation>
    <scope>NUCLEOTIDE SEQUENCE [LARGE SCALE GENOMIC DNA]</scope>
    <source>
        <strain>YJM789</strain>
    </source>
</reference>
<proteinExistence type="inferred from homology"/>